<proteinExistence type="inferred from homology"/>
<feature type="chain" id="PRO_0000346126" description="Cell division protein ZapA">
    <location>
        <begin position="1"/>
        <end position="99"/>
    </location>
</feature>
<feature type="coiled-coil region" evidence="2">
    <location>
        <begin position="76"/>
        <end position="96"/>
    </location>
</feature>
<protein>
    <recommendedName>
        <fullName>Cell division protein ZapA</fullName>
    </recommendedName>
    <alternativeName>
        <fullName>Z ring-associated protein ZapA</fullName>
    </alternativeName>
</protein>
<organism>
    <name type="scientific">Histophilus somni (strain 2336)</name>
    <name type="common">Haemophilus somnus</name>
    <dbReference type="NCBI Taxonomy" id="228400"/>
    <lineage>
        <taxon>Bacteria</taxon>
        <taxon>Pseudomonadati</taxon>
        <taxon>Pseudomonadota</taxon>
        <taxon>Gammaproteobacteria</taxon>
        <taxon>Pasteurellales</taxon>
        <taxon>Pasteurellaceae</taxon>
        <taxon>Histophilus</taxon>
    </lineage>
</organism>
<accession>B0UTH6</accession>
<reference key="1">
    <citation type="submission" date="2008-02" db="EMBL/GenBank/DDBJ databases">
        <title>Complete sequence of Haemophilus somnus 2336.</title>
        <authorList>
            <consortium name="US DOE Joint Genome Institute"/>
            <person name="Siddaramappa S."/>
            <person name="Duncan A.J."/>
            <person name="Challacombe J.F."/>
            <person name="Rainey D."/>
            <person name="Gillaspy A.F."/>
            <person name="Carson M."/>
            <person name="Gipson J."/>
            <person name="Gipson M."/>
            <person name="Bruce D."/>
            <person name="Detter J.C."/>
            <person name="Han C.S."/>
            <person name="Land M."/>
            <person name="Tapia R."/>
            <person name="Thompson L.S."/>
            <person name="Orvis J."/>
            <person name="Zaitshik J."/>
            <person name="Barnes G."/>
            <person name="Brettin T.S."/>
            <person name="Dyer D.W."/>
            <person name="Inzana T.J."/>
        </authorList>
    </citation>
    <scope>NUCLEOTIDE SEQUENCE [LARGE SCALE GENOMIC DNA]</scope>
    <source>
        <strain>2336</strain>
    </source>
</reference>
<gene>
    <name type="primary">zapA</name>
    <name type="ordered locus">HSM_1095</name>
</gene>
<name>ZAPA_HISS2</name>
<comment type="function">
    <text evidence="1">Activator of cell division through the inhibition of FtsZ GTPase activity, therefore promoting FtsZ assembly into bundles of protofilaments necessary for the formation of the division Z ring. It is recruited early at mid-cell but it is not essential for cell division (By similarity).</text>
</comment>
<comment type="subunit">
    <text evidence="1">Homodimer. Interacts with FtsZ (By similarity).</text>
</comment>
<comment type="subcellular location">
    <subcellularLocation>
        <location evidence="1">Cytoplasm</location>
    </subcellularLocation>
    <text evidence="1">Localizes at mid-cell.</text>
</comment>
<comment type="similarity">
    <text evidence="3">Belongs to the ZapA family. Type 1 subfamily.</text>
</comment>
<dbReference type="EMBL" id="CP000947">
    <property type="protein sequence ID" value="ACA30812.1"/>
    <property type="molecule type" value="Genomic_DNA"/>
</dbReference>
<dbReference type="RefSeq" id="WP_011608840.1">
    <property type="nucleotide sequence ID" value="NC_010519.1"/>
</dbReference>
<dbReference type="SMR" id="B0UTH6"/>
<dbReference type="STRING" id="228400.HSM_1095"/>
<dbReference type="GeneID" id="31487395"/>
<dbReference type="KEGG" id="hsm:HSM_1095"/>
<dbReference type="HOGENOM" id="CLU_116623_3_0_6"/>
<dbReference type="GO" id="GO:0032153">
    <property type="term" value="C:cell division site"/>
    <property type="evidence" value="ECO:0007669"/>
    <property type="project" value="TreeGrafter"/>
</dbReference>
<dbReference type="GO" id="GO:0030428">
    <property type="term" value="C:cell septum"/>
    <property type="evidence" value="ECO:0007669"/>
    <property type="project" value="TreeGrafter"/>
</dbReference>
<dbReference type="GO" id="GO:0005829">
    <property type="term" value="C:cytosol"/>
    <property type="evidence" value="ECO:0007669"/>
    <property type="project" value="TreeGrafter"/>
</dbReference>
<dbReference type="GO" id="GO:0000917">
    <property type="term" value="P:division septum assembly"/>
    <property type="evidence" value="ECO:0007669"/>
    <property type="project" value="UniProtKB-KW"/>
</dbReference>
<dbReference type="GO" id="GO:0043093">
    <property type="term" value="P:FtsZ-dependent cytokinesis"/>
    <property type="evidence" value="ECO:0007669"/>
    <property type="project" value="TreeGrafter"/>
</dbReference>
<dbReference type="GO" id="GO:0000921">
    <property type="term" value="P:septin ring assembly"/>
    <property type="evidence" value="ECO:0007669"/>
    <property type="project" value="TreeGrafter"/>
</dbReference>
<dbReference type="Gene3D" id="1.20.5.50">
    <property type="match status" value="1"/>
</dbReference>
<dbReference type="Gene3D" id="3.30.160.880">
    <property type="entry name" value="Cell division protein ZapA protomer, N-terminal domain"/>
    <property type="match status" value="1"/>
</dbReference>
<dbReference type="InterPro" id="IPR007838">
    <property type="entry name" value="Cell_div_ZapA-like"/>
</dbReference>
<dbReference type="InterPro" id="IPR036192">
    <property type="entry name" value="Cell_div_ZapA-like_sf"/>
</dbReference>
<dbReference type="InterPro" id="IPR042233">
    <property type="entry name" value="Cell_div_ZapA_N"/>
</dbReference>
<dbReference type="PANTHER" id="PTHR34981">
    <property type="entry name" value="CELL DIVISION PROTEIN ZAPA"/>
    <property type="match status" value="1"/>
</dbReference>
<dbReference type="PANTHER" id="PTHR34981:SF1">
    <property type="entry name" value="CELL DIVISION PROTEIN ZAPA"/>
    <property type="match status" value="1"/>
</dbReference>
<dbReference type="Pfam" id="PF05164">
    <property type="entry name" value="ZapA"/>
    <property type="match status" value="1"/>
</dbReference>
<dbReference type="SUPFAM" id="SSF102829">
    <property type="entry name" value="Cell division protein ZapA-like"/>
    <property type="match status" value="1"/>
</dbReference>
<keyword id="KW-0131">Cell cycle</keyword>
<keyword id="KW-0132">Cell division</keyword>
<keyword id="KW-0175">Coiled coil</keyword>
<keyword id="KW-0963">Cytoplasm</keyword>
<keyword id="KW-0717">Septation</keyword>
<evidence type="ECO:0000250" key="1"/>
<evidence type="ECO:0000255" key="2"/>
<evidence type="ECO:0000305" key="3"/>
<sequence length="99" mass="11301">MSKLIELSVSGQVLRLNCPPEQHDALRQAAHLLDNRVMEMRERTGILQMEKILSIVALNLSFELMQEQQKTQTIENVINQKIAQLEGSLENILAQKTTF</sequence>